<comment type="function">
    <text evidence="1">The proteasome is a multicatalytic proteinase complex which is characterized by its ability to cleave peptides with Arg, Phe, Tyr, Leu, and Glu adjacent to the leaving group at neutral or slightly basic pH. The proteasome has an ATP-dependent proteolytic activity (By similarity).</text>
</comment>
<comment type="subunit">
    <text evidence="1">The 26S proteasome consists of a 20S proteasome core and two 19S regulatory subunits. The 20S proteasome core is composed of 28 subunits that are arranged in four stacked rings, resulting in a barrel-shaped structure. The two end rings are each formed by seven alpha subunits, and the two central rings are each formed by seven beta subunits. The catalytic chamber with the active sites is on the inside of the barrel (By similarity).</text>
</comment>
<comment type="interaction">
    <interactant intactId="EBI-318264">
        <id>O44156</id>
    </interactant>
    <interactant intactId="EBI-318271">
        <id>Q27488</id>
        <label>pas-2</label>
    </interactant>
    <organismsDiffer>false</organismsDiffer>
    <experiments>3</experiments>
</comment>
<comment type="interaction">
    <interactant intactId="EBI-318264">
        <id>O44156</id>
    </interactant>
    <interactant intactId="EBI-315406">
        <id>Q09583</id>
        <label>pas-7</label>
    </interactant>
    <organismsDiffer>false</organismsDiffer>
    <experiments>5</experiments>
</comment>
<comment type="subcellular location">
    <subcellularLocation>
        <location evidence="1">Cytoplasm</location>
    </subcellularLocation>
    <subcellularLocation>
        <location evidence="1">Nucleus</location>
    </subcellularLocation>
</comment>
<comment type="similarity">
    <text evidence="2">Belongs to the peptidase T1A family.</text>
</comment>
<name>PSA1_CAEEL</name>
<sequence>MFRNQYDGDVTVWSPQGRLHQVEYAVEAMKQGSATVGIKSETHAVIVALKRAQNDLSSHQKKVYEIDTHAGVSIAGLLSDGRILARYLQTECSSWRWDYKQAVPIKKLAESMQLKLQANTQYYGRRPFGVGILIAGYDKDGAHIIQTDPSAEVVSMHGTSIGARSQSARTYLERNVDNFEKSTPEQLIVHALLALRDTLPAEENLNAQNTSIGIVGKDSPFSLLEDAQVAVHLNQVSTHPRTTGGAAAAAAPGGAEPMQM</sequence>
<keyword id="KW-0963">Cytoplasm</keyword>
<keyword id="KW-0539">Nucleus</keyword>
<keyword id="KW-0647">Proteasome</keyword>
<keyword id="KW-1185">Reference proteome</keyword>
<evidence type="ECO:0000250" key="1"/>
<evidence type="ECO:0000255" key="2">
    <source>
        <dbReference type="PROSITE-ProRule" id="PRU00808"/>
    </source>
</evidence>
<evidence type="ECO:0000256" key="3">
    <source>
        <dbReference type="SAM" id="MobiDB-lite"/>
    </source>
</evidence>
<reference key="1">
    <citation type="journal article" date="1998" name="Science">
        <title>Genome sequence of the nematode C. elegans: a platform for investigating biology.</title>
        <authorList>
            <consortium name="The C. elegans sequencing consortium"/>
        </authorList>
    </citation>
    <scope>NUCLEOTIDE SEQUENCE [LARGE SCALE GENOMIC DNA]</scope>
    <source>
        <strain>Bristol N2</strain>
    </source>
</reference>
<protein>
    <recommendedName>
        <fullName>Proteasome subunit alpha type-1</fullName>
    </recommendedName>
    <alternativeName>
        <fullName>Proteasome subunit alpha 6</fullName>
    </alternativeName>
</protein>
<dbReference type="EMBL" id="FO080609">
    <property type="protein sequence ID" value="CCD65121.1"/>
    <property type="molecule type" value="Genomic_DNA"/>
</dbReference>
<dbReference type="PIR" id="T32525">
    <property type="entry name" value="T32525"/>
</dbReference>
<dbReference type="RefSeq" id="NP_504472.1">
    <property type="nucleotide sequence ID" value="NM_072071.6"/>
</dbReference>
<dbReference type="SMR" id="O44156"/>
<dbReference type="BioGRID" id="43992">
    <property type="interactions" value="48"/>
</dbReference>
<dbReference type="FunCoup" id="O44156">
    <property type="interactions" value="2806"/>
</dbReference>
<dbReference type="IntAct" id="O44156">
    <property type="interactions" value="10"/>
</dbReference>
<dbReference type="STRING" id="6239.CD4.6.1"/>
<dbReference type="MEROPS" id="T01.976"/>
<dbReference type="PaxDb" id="6239-CD4.6"/>
<dbReference type="PeptideAtlas" id="O44156"/>
<dbReference type="EnsemblMetazoa" id="CD4.6.1">
    <property type="protein sequence ID" value="CD4.6.1"/>
    <property type="gene ID" value="WBGene00003927"/>
</dbReference>
<dbReference type="GeneID" id="178943"/>
<dbReference type="KEGG" id="cel:CELE_CD4.6"/>
<dbReference type="UCSC" id="CD4.6.1">
    <property type="organism name" value="c. elegans"/>
</dbReference>
<dbReference type="AGR" id="WB:WBGene00003927"/>
<dbReference type="CTD" id="178943"/>
<dbReference type="WormBase" id="CD4.6">
    <property type="protein sequence ID" value="CE16954"/>
    <property type="gene ID" value="WBGene00003927"/>
    <property type="gene designation" value="pas-6"/>
</dbReference>
<dbReference type="eggNOG" id="KOG0863">
    <property type="taxonomic scope" value="Eukaryota"/>
</dbReference>
<dbReference type="GeneTree" id="ENSGT00550000074855"/>
<dbReference type="HOGENOM" id="CLU_035750_8_0_1"/>
<dbReference type="InParanoid" id="O44156"/>
<dbReference type="OMA" id="NTQVYGK"/>
<dbReference type="OrthoDB" id="431557at2759"/>
<dbReference type="PhylomeDB" id="O44156"/>
<dbReference type="Reactome" id="R-CEL-1234176">
    <property type="pathway name" value="Oxygen-dependent proline hydroxylation of Hypoxia-inducible Factor Alpha"/>
</dbReference>
<dbReference type="Reactome" id="R-CEL-1236978">
    <property type="pathway name" value="Cross-presentation of soluble exogenous antigens (endosomes)"/>
</dbReference>
<dbReference type="Reactome" id="R-CEL-187577">
    <property type="pathway name" value="SCF(Skp2)-mediated degradation of p27/p21"/>
</dbReference>
<dbReference type="Reactome" id="R-CEL-195253">
    <property type="pathway name" value="Degradation of beta-catenin by the destruction complex"/>
</dbReference>
<dbReference type="Reactome" id="R-CEL-349425">
    <property type="pathway name" value="Autodegradation of the E3 ubiquitin ligase COP1"/>
</dbReference>
<dbReference type="Reactome" id="R-CEL-350562">
    <property type="pathway name" value="Regulation of ornithine decarboxylase (ODC)"/>
</dbReference>
<dbReference type="Reactome" id="R-CEL-382556">
    <property type="pathway name" value="ABC-family proteins mediated transport"/>
</dbReference>
<dbReference type="Reactome" id="R-CEL-4608870">
    <property type="pathway name" value="Asymmetric localization of PCP proteins"/>
</dbReference>
<dbReference type="Reactome" id="R-CEL-4641258">
    <property type="pathway name" value="Degradation of DVL"/>
</dbReference>
<dbReference type="Reactome" id="R-CEL-5632684">
    <property type="pathway name" value="Hedgehog 'on' state"/>
</dbReference>
<dbReference type="Reactome" id="R-CEL-5687128">
    <property type="pathway name" value="MAPK6/MAPK4 signaling"/>
</dbReference>
<dbReference type="Reactome" id="R-CEL-5689603">
    <property type="pathway name" value="UCH proteinases"/>
</dbReference>
<dbReference type="Reactome" id="R-CEL-5689880">
    <property type="pathway name" value="Ub-specific processing proteases"/>
</dbReference>
<dbReference type="Reactome" id="R-CEL-68949">
    <property type="pathway name" value="Orc1 removal from chromatin"/>
</dbReference>
<dbReference type="Reactome" id="R-CEL-69017">
    <property type="pathway name" value="CDK-mediated phosphorylation and removal of Cdc6"/>
</dbReference>
<dbReference type="Reactome" id="R-CEL-69601">
    <property type="pathway name" value="Ubiquitin Mediated Degradation of Phosphorylated Cdc25A"/>
</dbReference>
<dbReference type="Reactome" id="R-CEL-75815">
    <property type="pathway name" value="Ubiquitin-dependent degradation of Cyclin D"/>
</dbReference>
<dbReference type="Reactome" id="R-CEL-8854050">
    <property type="pathway name" value="FBXL7 down-regulates AURKA during mitotic entry and in early mitosis"/>
</dbReference>
<dbReference type="Reactome" id="R-CEL-8939902">
    <property type="pathway name" value="Regulation of RUNX2 expression and activity"/>
</dbReference>
<dbReference type="Reactome" id="R-CEL-8941858">
    <property type="pathway name" value="Regulation of RUNX3 expression and activity"/>
</dbReference>
<dbReference type="Reactome" id="R-CEL-8948751">
    <property type="pathway name" value="Regulation of PTEN stability and activity"/>
</dbReference>
<dbReference type="Reactome" id="R-CEL-8951664">
    <property type="pathway name" value="Neddylation"/>
</dbReference>
<dbReference type="Reactome" id="R-CEL-9755511">
    <property type="pathway name" value="KEAP1-NFE2L2 pathway"/>
</dbReference>
<dbReference type="Reactome" id="R-CEL-9762114">
    <property type="pathway name" value="GSK3B and BTRC:CUL1-mediated-degradation of NFE2L2"/>
</dbReference>
<dbReference type="Reactome" id="R-CEL-983168">
    <property type="pathway name" value="Antigen processing: Ubiquitination &amp; Proteasome degradation"/>
</dbReference>
<dbReference type="Reactome" id="R-CEL-9907900">
    <property type="pathway name" value="Proteasome assembly"/>
</dbReference>
<dbReference type="PRO" id="PR:O44156"/>
<dbReference type="Proteomes" id="UP000001940">
    <property type="component" value="Chromosome V"/>
</dbReference>
<dbReference type="Bgee" id="WBGene00003927">
    <property type="expression patterns" value="Expressed in germ line (C elegans) and 4 other cell types or tissues"/>
</dbReference>
<dbReference type="GO" id="GO:0005737">
    <property type="term" value="C:cytoplasm"/>
    <property type="evidence" value="ECO:0007669"/>
    <property type="project" value="UniProtKB-SubCell"/>
</dbReference>
<dbReference type="GO" id="GO:0005634">
    <property type="term" value="C:nucleus"/>
    <property type="evidence" value="ECO:0000318"/>
    <property type="project" value="GO_Central"/>
</dbReference>
<dbReference type="GO" id="GO:0019773">
    <property type="term" value="C:proteasome core complex, alpha-subunit complex"/>
    <property type="evidence" value="ECO:0000250"/>
    <property type="project" value="UniProtKB"/>
</dbReference>
<dbReference type="GO" id="GO:0043161">
    <property type="term" value="P:proteasome-mediated ubiquitin-dependent protein catabolic process"/>
    <property type="evidence" value="ECO:0000318"/>
    <property type="project" value="GO_Central"/>
</dbReference>
<dbReference type="CDD" id="cd03749">
    <property type="entry name" value="proteasome_alpha_type_1"/>
    <property type="match status" value="1"/>
</dbReference>
<dbReference type="FunFam" id="3.60.20.10:FF:000016">
    <property type="entry name" value="Proteasome subunit alpha type-6"/>
    <property type="match status" value="1"/>
</dbReference>
<dbReference type="Gene3D" id="3.60.20.10">
    <property type="entry name" value="Glutamine Phosphoribosylpyrophosphate, subunit 1, domain 1"/>
    <property type="match status" value="1"/>
</dbReference>
<dbReference type="InterPro" id="IPR029055">
    <property type="entry name" value="Ntn_hydrolases_N"/>
</dbReference>
<dbReference type="InterPro" id="IPR050115">
    <property type="entry name" value="Proteasome_alpha"/>
</dbReference>
<dbReference type="InterPro" id="IPR023332">
    <property type="entry name" value="Proteasome_alpha-type"/>
</dbReference>
<dbReference type="InterPro" id="IPR035144">
    <property type="entry name" value="Proteasome_alpha1"/>
</dbReference>
<dbReference type="InterPro" id="IPR000426">
    <property type="entry name" value="Proteasome_asu_N"/>
</dbReference>
<dbReference type="InterPro" id="IPR001353">
    <property type="entry name" value="Proteasome_sua/b"/>
</dbReference>
<dbReference type="PANTHER" id="PTHR11599">
    <property type="entry name" value="PROTEASOME SUBUNIT ALPHA/BETA"/>
    <property type="match status" value="1"/>
</dbReference>
<dbReference type="Pfam" id="PF00227">
    <property type="entry name" value="Proteasome"/>
    <property type="match status" value="1"/>
</dbReference>
<dbReference type="Pfam" id="PF10584">
    <property type="entry name" value="Proteasome_A_N"/>
    <property type="match status" value="1"/>
</dbReference>
<dbReference type="SMART" id="SM00948">
    <property type="entry name" value="Proteasome_A_N"/>
    <property type="match status" value="1"/>
</dbReference>
<dbReference type="SUPFAM" id="SSF56235">
    <property type="entry name" value="N-terminal nucleophile aminohydrolases (Ntn hydrolases)"/>
    <property type="match status" value="1"/>
</dbReference>
<dbReference type="PROSITE" id="PS00388">
    <property type="entry name" value="PROTEASOME_ALPHA_1"/>
    <property type="match status" value="1"/>
</dbReference>
<dbReference type="PROSITE" id="PS51475">
    <property type="entry name" value="PROTEASOME_ALPHA_2"/>
    <property type="match status" value="1"/>
</dbReference>
<gene>
    <name type="primary">pas-6</name>
    <name type="ORF">CD4.6</name>
</gene>
<proteinExistence type="evidence at protein level"/>
<feature type="chain" id="PRO_0000124066" description="Proteasome subunit alpha type-1">
    <location>
        <begin position="1"/>
        <end position="260"/>
    </location>
</feature>
<feature type="region of interest" description="Disordered" evidence="3">
    <location>
        <begin position="240"/>
        <end position="260"/>
    </location>
</feature>
<feature type="compositionally biased region" description="Low complexity" evidence="3">
    <location>
        <begin position="244"/>
        <end position="260"/>
    </location>
</feature>
<accession>O44156</accession>
<organism>
    <name type="scientific">Caenorhabditis elegans</name>
    <dbReference type="NCBI Taxonomy" id="6239"/>
    <lineage>
        <taxon>Eukaryota</taxon>
        <taxon>Metazoa</taxon>
        <taxon>Ecdysozoa</taxon>
        <taxon>Nematoda</taxon>
        <taxon>Chromadorea</taxon>
        <taxon>Rhabditida</taxon>
        <taxon>Rhabditina</taxon>
        <taxon>Rhabditomorpha</taxon>
        <taxon>Rhabditoidea</taxon>
        <taxon>Rhabditidae</taxon>
        <taxon>Peloderinae</taxon>
        <taxon>Caenorhabditis</taxon>
    </lineage>
</organism>